<evidence type="ECO:0000250" key="1"/>
<evidence type="ECO:0000255" key="2"/>
<evidence type="ECO:0000256" key="3">
    <source>
        <dbReference type="SAM" id="MobiDB-lite"/>
    </source>
</evidence>
<evidence type="ECO:0000305" key="4"/>
<gene>
    <name type="primary">adg3</name>
    <name type="ORF">SPCC18.01c</name>
    <name type="ORF">SPCC74.07c</name>
</gene>
<accession>O74851</accession>
<accession>P78777</accession>
<sequence>MPSKIEKICLLLLGFTAASNVNAYSHRRAGDTLHHRHKHEKHNDLTDSSYEPLTLSYNDTQIQQLQRRDTVQCAFPYGDKMVAVTPDEGNAGWAMSPDQYCTAGTWCPYACEPGYLMGQWDPNATSYTYPESMYGGLYCNSDGVAVKPFPSKDYCYPGVGDLSVVDQTGDGIAFCQTVLPGNEAMLIPTWVAPDSEQVLAVPDISYWDETAAHYYVNPPGVSTTDGCVWGTSANPYGNWAPYVAGANMDENNITYVKLGANPIYLDDSYWSTVKPTYGLALECEGDTCSGLPCYVDPRENGVQGCPEGSPIGAGGACFCVVGFQQGTTAKIVVVDYSEEMASSSSSASATATSSAESSIATSPITSSSNVVSSISTSSMDSSAVSSYSVVQSSLASIISNAYIATSKSGLNSGVSTLLASPTSSSTFVTSLLRRSSIDGSASSSSASLAVPTVSSSTTGSLHYKTTTTVWVTEVFTRYLGDDSTPVTSSSIFSTATEATDTSVQTSSAIYDSSSTSNIQSSSSVYASSTGALSSNSLSSSTSSVSTSYIPNASSSVYASSTEALSSNSLSSSTSSASTSYIPSASSSYEVASNSSDYYSQTVSSITASGTTSSTSEIVSTPASNSNTGSLNGTSSFNVNSVGPSSSQTTPTSSSSITGSQSLKETSSPAYVSSTVSYTSSSVDSSSTYNSTGSSSSDSQSFSGTTYSDPTTTITSEVSSILSSPTSMQSSVSRPQSSGDASGFNTIFTSISQSSDGETSGYTISSNSSQNSASEPQTAFTSSSSSATPTITQSSISTSVSSQSSMNSSYSSPISSNSVTSSTSIISSIASSSYTSIPSISSIASSFFDASGFTSIYNGTKAGFSSSFALASNSESGASDVLSSTIAKPTFKFSTSNSGSTSYSIPSSSSRNEGTTSYSSNITVTSSTLKPSLTSSVSTASSYIASSASSNTLSTEPKTFSSSSTLSESISSINTNSLTVKPESSLSSSTTSGLTSSSSTIPSSTRSESNSESASTSSASKRSSSSTSLVQSNPVKTVVSLESYKFTTSKISLVKNPTKTYTVTDVETNVVVQTHTVSYVEHSTSYTWVHTTLYEYADVEASTKSTSEPSAKSKRNAVSTFETVFLKSKSSA</sequence>
<proteinExistence type="evidence at transcript level"/>
<organism>
    <name type="scientific">Schizosaccharomyces pombe (strain 972 / ATCC 24843)</name>
    <name type="common">Fission yeast</name>
    <dbReference type="NCBI Taxonomy" id="284812"/>
    <lineage>
        <taxon>Eukaryota</taxon>
        <taxon>Fungi</taxon>
        <taxon>Dikarya</taxon>
        <taxon>Ascomycota</taxon>
        <taxon>Taphrinomycotina</taxon>
        <taxon>Schizosaccharomycetes</taxon>
        <taxon>Schizosaccharomycetales</taxon>
        <taxon>Schizosaccharomycetaceae</taxon>
        <taxon>Schizosaccharomyces</taxon>
    </lineage>
</organism>
<comment type="function">
    <text evidence="1">Cell surface beta-glucosidase involved in cell wall biogenesis,.</text>
</comment>
<comment type="subcellular location">
    <subcellularLocation>
        <location evidence="4">Secreted</location>
    </subcellularLocation>
</comment>
<comment type="similarity">
    <text evidence="4">Belongs to the SUN family.</text>
</comment>
<dbReference type="EC" id="3.2.1.-"/>
<dbReference type="EMBL" id="CU329672">
    <property type="protein sequence ID" value="CAA20837.2"/>
    <property type="molecule type" value="Genomic_DNA"/>
</dbReference>
<dbReference type="EMBL" id="D89125">
    <property type="protein sequence ID" value="BAA13787.1"/>
    <property type="molecule type" value="mRNA"/>
</dbReference>
<dbReference type="PIR" id="T41144">
    <property type="entry name" value="T41144"/>
</dbReference>
<dbReference type="PIR" id="T42367">
    <property type="entry name" value="T42367"/>
</dbReference>
<dbReference type="RefSeq" id="NP_588380.2">
    <property type="nucleotide sequence ID" value="NM_001023371.2"/>
</dbReference>
<dbReference type="STRING" id="284812.O74851"/>
<dbReference type="CAZy" id="GH132">
    <property type="family name" value="Glycoside Hydrolase Family 132"/>
</dbReference>
<dbReference type="GlyCosmos" id="O74851">
    <property type="glycosylation" value="11 sites, No reported glycans"/>
</dbReference>
<dbReference type="iPTMnet" id="O74851"/>
<dbReference type="PaxDb" id="4896-SPCC18.01c.1"/>
<dbReference type="EnsemblFungi" id="SPCC18.01c.1">
    <property type="protein sequence ID" value="SPCC18.01c.1:pep"/>
    <property type="gene ID" value="SPCC18.01c"/>
</dbReference>
<dbReference type="GeneID" id="2539118"/>
<dbReference type="KEGG" id="spo:2539118"/>
<dbReference type="PomBase" id="SPCC18.01c">
    <property type="gene designation" value="adg3"/>
</dbReference>
<dbReference type="VEuPathDB" id="FungiDB:SPCC18.01c"/>
<dbReference type="eggNOG" id="ENOG502QWHV">
    <property type="taxonomic scope" value="Eukaryota"/>
</dbReference>
<dbReference type="HOGENOM" id="CLU_279002_0_0_1"/>
<dbReference type="InParanoid" id="O74851"/>
<dbReference type="OMA" id="IPTEMET"/>
<dbReference type="PRO" id="PR:O74851"/>
<dbReference type="Proteomes" id="UP000002485">
    <property type="component" value="Chromosome III"/>
</dbReference>
<dbReference type="GO" id="GO:0005576">
    <property type="term" value="C:extracellular region"/>
    <property type="evidence" value="ECO:0000314"/>
    <property type="project" value="PomBase"/>
</dbReference>
<dbReference type="GO" id="GO:0009277">
    <property type="term" value="C:fungal-type cell wall"/>
    <property type="evidence" value="ECO:0000303"/>
    <property type="project" value="PomBase"/>
</dbReference>
<dbReference type="GO" id="GO:0008422">
    <property type="term" value="F:beta-glucosidase activity"/>
    <property type="evidence" value="ECO:0000255"/>
    <property type="project" value="PomBase"/>
</dbReference>
<dbReference type="GO" id="GO:0071555">
    <property type="term" value="P:cell wall organization"/>
    <property type="evidence" value="ECO:0007669"/>
    <property type="project" value="UniProtKB-KW"/>
</dbReference>
<dbReference type="GO" id="GO:0000272">
    <property type="term" value="P:polysaccharide catabolic process"/>
    <property type="evidence" value="ECO:0007669"/>
    <property type="project" value="UniProtKB-KW"/>
</dbReference>
<dbReference type="InterPro" id="IPR053088">
    <property type="entry name" value="Beta-glucosidase/SUN-like"/>
</dbReference>
<dbReference type="InterPro" id="IPR005556">
    <property type="entry name" value="SUN"/>
</dbReference>
<dbReference type="PANTHER" id="PTHR31654">
    <property type="entry name" value="SECRETED BETA-GLUCOSIDASE ADG3-RELATED"/>
    <property type="match status" value="1"/>
</dbReference>
<dbReference type="PANTHER" id="PTHR31654:SF0">
    <property type="entry name" value="SECRETED BETA-GLUCOSIDASE ADG3-RELATED"/>
    <property type="match status" value="1"/>
</dbReference>
<dbReference type="Pfam" id="PF03856">
    <property type="entry name" value="SUN"/>
    <property type="match status" value="1"/>
</dbReference>
<keyword id="KW-0119">Carbohydrate metabolism</keyword>
<keyword id="KW-0961">Cell wall biogenesis/degradation</keyword>
<keyword id="KW-0325">Glycoprotein</keyword>
<keyword id="KW-0326">Glycosidase</keyword>
<keyword id="KW-0378">Hydrolase</keyword>
<keyword id="KW-0624">Polysaccharide degradation</keyword>
<keyword id="KW-1185">Reference proteome</keyword>
<keyword id="KW-0964">Secreted</keyword>
<keyword id="KW-0732">Signal</keyword>
<feature type="signal peptide" evidence="2">
    <location>
        <begin position="1"/>
        <end position="23"/>
    </location>
</feature>
<feature type="chain" id="PRO_0000033462" description="Probable secreted beta-glucosidase adg3">
    <location>
        <begin position="24"/>
        <end position="1131"/>
    </location>
</feature>
<feature type="region of interest" description="Disordered" evidence="3">
    <location>
        <begin position="609"/>
        <end position="819"/>
    </location>
</feature>
<feature type="region of interest" description="Disordered" evidence="3">
    <location>
        <begin position="893"/>
        <end position="918"/>
    </location>
</feature>
<feature type="region of interest" description="Disordered" evidence="3">
    <location>
        <begin position="977"/>
        <end position="1031"/>
    </location>
</feature>
<feature type="compositionally biased region" description="Low complexity" evidence="3">
    <location>
        <begin position="623"/>
        <end position="715"/>
    </location>
</feature>
<feature type="compositionally biased region" description="Polar residues" evidence="3">
    <location>
        <begin position="716"/>
        <end position="725"/>
    </location>
</feature>
<feature type="compositionally biased region" description="Low complexity" evidence="3">
    <location>
        <begin position="726"/>
        <end position="737"/>
    </location>
</feature>
<feature type="compositionally biased region" description="Polar residues" evidence="3">
    <location>
        <begin position="738"/>
        <end position="763"/>
    </location>
</feature>
<feature type="compositionally biased region" description="Low complexity" evidence="3">
    <location>
        <begin position="764"/>
        <end position="773"/>
    </location>
</feature>
<feature type="compositionally biased region" description="Low complexity" evidence="3">
    <location>
        <begin position="780"/>
        <end position="819"/>
    </location>
</feature>
<feature type="compositionally biased region" description="Low complexity" evidence="3">
    <location>
        <begin position="893"/>
        <end position="909"/>
    </location>
</feature>
<feature type="compositionally biased region" description="Low complexity" evidence="3">
    <location>
        <begin position="977"/>
        <end position="1027"/>
    </location>
</feature>
<feature type="glycosylation site" description="N-linked (GlcNAc...) asparagine" evidence="2">
    <location>
        <position position="58"/>
    </location>
</feature>
<feature type="glycosylation site" description="N-linked (GlcNAc...) asparagine" evidence="2">
    <location>
        <position position="123"/>
    </location>
</feature>
<feature type="glycosylation site" description="N-linked (GlcNAc...) asparagine" evidence="2">
    <location>
        <position position="252"/>
    </location>
</feature>
<feature type="glycosylation site" description="N-linked (GlcNAc...) asparagine" evidence="2">
    <location>
        <position position="551"/>
    </location>
</feature>
<feature type="glycosylation site" description="N-linked (GlcNAc...) asparagine" evidence="2">
    <location>
        <position position="593"/>
    </location>
</feature>
<feature type="glycosylation site" description="N-linked (GlcNAc...) asparagine" evidence="2">
    <location>
        <position position="631"/>
    </location>
</feature>
<feature type="glycosylation site" description="N-linked (GlcNAc...) asparagine" evidence="2">
    <location>
        <position position="689"/>
    </location>
</feature>
<feature type="glycosylation site" description="N-linked (GlcNAc...) asparagine" evidence="2">
    <location>
        <position position="766"/>
    </location>
</feature>
<feature type="glycosylation site" description="N-linked (GlcNAc...) asparagine" evidence="2">
    <location>
        <position position="806"/>
    </location>
</feature>
<feature type="glycosylation site" description="N-linked (GlcNAc...) asparagine" evidence="2">
    <location>
        <position position="857"/>
    </location>
</feature>
<feature type="glycosylation site" description="N-linked (GlcNAc...) asparagine" evidence="2">
    <location>
        <position position="920"/>
    </location>
</feature>
<feature type="sequence conflict" description="In Ref. 2; BAA13787." evidence="4" ref="2">
    <original>DAS</original>
    <variation>MLV</variation>
    <location>
        <begin position="848"/>
        <end position="850"/>
    </location>
</feature>
<reference key="1">
    <citation type="journal article" date="2002" name="Nature">
        <title>The genome sequence of Schizosaccharomyces pombe.</title>
        <authorList>
            <person name="Wood V."/>
            <person name="Gwilliam R."/>
            <person name="Rajandream M.A."/>
            <person name="Lyne M.H."/>
            <person name="Lyne R."/>
            <person name="Stewart A."/>
            <person name="Sgouros J.G."/>
            <person name="Peat N."/>
            <person name="Hayles J."/>
            <person name="Baker S.G."/>
            <person name="Basham D."/>
            <person name="Bowman S."/>
            <person name="Brooks K."/>
            <person name="Brown D."/>
            <person name="Brown S."/>
            <person name="Chillingworth T."/>
            <person name="Churcher C.M."/>
            <person name="Collins M."/>
            <person name="Connor R."/>
            <person name="Cronin A."/>
            <person name="Davis P."/>
            <person name="Feltwell T."/>
            <person name="Fraser A."/>
            <person name="Gentles S."/>
            <person name="Goble A."/>
            <person name="Hamlin N."/>
            <person name="Harris D.E."/>
            <person name="Hidalgo J."/>
            <person name="Hodgson G."/>
            <person name="Holroyd S."/>
            <person name="Hornsby T."/>
            <person name="Howarth S."/>
            <person name="Huckle E.J."/>
            <person name="Hunt S."/>
            <person name="Jagels K."/>
            <person name="James K.D."/>
            <person name="Jones L."/>
            <person name="Jones M."/>
            <person name="Leather S."/>
            <person name="McDonald S."/>
            <person name="McLean J."/>
            <person name="Mooney P."/>
            <person name="Moule S."/>
            <person name="Mungall K.L."/>
            <person name="Murphy L.D."/>
            <person name="Niblett D."/>
            <person name="Odell C."/>
            <person name="Oliver K."/>
            <person name="O'Neil S."/>
            <person name="Pearson D."/>
            <person name="Quail M.A."/>
            <person name="Rabbinowitsch E."/>
            <person name="Rutherford K.M."/>
            <person name="Rutter S."/>
            <person name="Saunders D."/>
            <person name="Seeger K."/>
            <person name="Sharp S."/>
            <person name="Skelton J."/>
            <person name="Simmonds M.N."/>
            <person name="Squares R."/>
            <person name="Squares S."/>
            <person name="Stevens K."/>
            <person name="Taylor K."/>
            <person name="Taylor R.G."/>
            <person name="Tivey A."/>
            <person name="Walsh S.V."/>
            <person name="Warren T."/>
            <person name="Whitehead S."/>
            <person name="Woodward J.R."/>
            <person name="Volckaert G."/>
            <person name="Aert R."/>
            <person name="Robben J."/>
            <person name="Grymonprez B."/>
            <person name="Weltjens I."/>
            <person name="Vanstreels E."/>
            <person name="Rieger M."/>
            <person name="Schaefer M."/>
            <person name="Mueller-Auer S."/>
            <person name="Gabel C."/>
            <person name="Fuchs M."/>
            <person name="Duesterhoeft A."/>
            <person name="Fritzc C."/>
            <person name="Holzer E."/>
            <person name="Moestl D."/>
            <person name="Hilbert H."/>
            <person name="Borzym K."/>
            <person name="Langer I."/>
            <person name="Beck A."/>
            <person name="Lehrach H."/>
            <person name="Reinhardt R."/>
            <person name="Pohl T.M."/>
            <person name="Eger P."/>
            <person name="Zimmermann W."/>
            <person name="Wedler H."/>
            <person name="Wambutt R."/>
            <person name="Purnelle B."/>
            <person name="Goffeau A."/>
            <person name="Cadieu E."/>
            <person name="Dreano S."/>
            <person name="Gloux S."/>
            <person name="Lelaure V."/>
            <person name="Mottier S."/>
            <person name="Galibert F."/>
            <person name="Aves S.J."/>
            <person name="Xiang Z."/>
            <person name="Hunt C."/>
            <person name="Moore K."/>
            <person name="Hurst S.M."/>
            <person name="Lucas M."/>
            <person name="Rochet M."/>
            <person name="Gaillardin C."/>
            <person name="Tallada V.A."/>
            <person name="Garzon A."/>
            <person name="Thode G."/>
            <person name="Daga R.R."/>
            <person name="Cruzado L."/>
            <person name="Jimenez J."/>
            <person name="Sanchez M."/>
            <person name="del Rey F."/>
            <person name="Benito J."/>
            <person name="Dominguez A."/>
            <person name="Revuelta J.L."/>
            <person name="Moreno S."/>
            <person name="Armstrong J."/>
            <person name="Forsburg S.L."/>
            <person name="Cerutti L."/>
            <person name="Lowe T."/>
            <person name="McCombie W.R."/>
            <person name="Paulsen I."/>
            <person name="Potashkin J."/>
            <person name="Shpakovski G.V."/>
            <person name="Ussery D."/>
            <person name="Barrell B.G."/>
            <person name="Nurse P."/>
        </authorList>
    </citation>
    <scope>NUCLEOTIDE SEQUENCE [LARGE SCALE GENOMIC DNA]</scope>
    <source>
        <strain>972 / ATCC 24843</strain>
    </source>
</reference>
<reference key="2">
    <citation type="journal article" date="1997" name="DNA Res.">
        <title>Identification of open reading frames in Schizosaccharomyces pombe cDNAs.</title>
        <authorList>
            <person name="Yoshioka S."/>
            <person name="Kato K."/>
            <person name="Nakai K."/>
            <person name="Okayama H."/>
            <person name="Nojima H."/>
        </authorList>
    </citation>
    <scope>NUCLEOTIDE SEQUENCE [LARGE SCALE MRNA] OF 848-1131</scope>
    <source>
        <strain>PR745</strain>
    </source>
</reference>
<protein>
    <recommendedName>
        <fullName>Probable secreted beta-glucosidase adg3</fullName>
        <ecNumber>3.2.1.-</ecNumber>
    </recommendedName>
</protein>
<name>ADG3_SCHPO</name>